<gene>
    <name type="primary">15</name>
</gene>
<protein>
    <recommendedName>
        <fullName>Gene 15 protein</fullName>
    </recommendedName>
    <alternativeName>
        <fullName>Gp15</fullName>
    </alternativeName>
</protein>
<keyword id="KW-1185">Reference proteome</keyword>
<accession>O64208</accession>
<feature type="chain" id="PRO_0000164718" description="Gene 15 protein">
    <location>
        <begin position="1"/>
        <end position="275"/>
    </location>
</feature>
<reference key="1">
    <citation type="journal article" date="1998" name="J. Mol. Biol.">
        <title>Genome structure of mycobacteriophage D29: implications for phage evolution.</title>
        <authorList>
            <person name="Ford M.E."/>
            <person name="Sarkis G.J."/>
            <person name="Belanger A.E."/>
            <person name="Hendrix R.W."/>
            <person name="Hatfull G.F."/>
        </authorList>
    </citation>
    <scope>NUCLEOTIDE SEQUENCE [LARGE SCALE GENOMIC DNA]</scope>
</reference>
<name>VG15_BPMD2</name>
<sequence length="275" mass="31200">MITAGLAGYVQRFASLFIRPALSIAEWLRLLQVLFPEVQRRYAEAADLGRDFYDSQRRLHHPELPRNERLRSDLQWEWFVRNMEPARKGLSQADSPQAAVTKLTLATVREVEMAGRRQIIGAVKNDPAPKIVKGWARVATGRETCAWCLMLISRGPEYLSADSGGLHLDTETVVDLWNEAGRDLEKFREETKPHIEEWHAGCDCLVVPVFDVENWPGKAAQERALQLWIDAGKEASQLIASGKARSKNENKETINALRRRLYRGEFAMSDYALAA</sequence>
<organism>
    <name type="scientific">Mycobacterium phage D29</name>
    <name type="common">Mycobacteriophage D29</name>
    <dbReference type="NCBI Taxonomy" id="28369"/>
    <lineage>
        <taxon>Viruses</taxon>
        <taxon>Duplodnaviria</taxon>
        <taxon>Heunggongvirae</taxon>
        <taxon>Uroviricota</taxon>
        <taxon>Caudoviricetes</taxon>
        <taxon>Fromanvirus</taxon>
    </lineage>
</organism>
<proteinExistence type="predicted"/>
<organismHost>
    <name type="scientific">Mycobacterium</name>
    <dbReference type="NCBI Taxonomy" id="1763"/>
</organismHost>
<dbReference type="EMBL" id="AF022214">
    <property type="protein sequence ID" value="AAC18455.1"/>
    <property type="molecule type" value="Genomic_DNA"/>
</dbReference>
<dbReference type="PIR" id="D72801">
    <property type="entry name" value="D72801"/>
</dbReference>
<dbReference type="RefSeq" id="NP_046830.1">
    <property type="nucleotide sequence ID" value="NC_001900.1"/>
</dbReference>
<dbReference type="GeneID" id="1261623"/>
<dbReference type="KEGG" id="vg:1261623"/>
<dbReference type="OrthoDB" id="5304at10239"/>
<dbReference type="Proteomes" id="UP000002131">
    <property type="component" value="Segment"/>
</dbReference>
<dbReference type="Pfam" id="PF25310">
    <property type="entry name" value="VG15"/>
    <property type="match status" value="1"/>
</dbReference>